<name>NRFC_SHIFL</name>
<accession>P0AAK9</accession>
<accession>P32708</accession>
<keyword id="KW-0004">4Fe-4S</keyword>
<keyword id="KW-0249">Electron transport</keyword>
<keyword id="KW-0408">Iron</keyword>
<keyword id="KW-0411">Iron-sulfur</keyword>
<keyword id="KW-0479">Metal-binding</keyword>
<keyword id="KW-0560">Oxidoreductase</keyword>
<keyword id="KW-1185">Reference proteome</keyword>
<keyword id="KW-0677">Repeat</keyword>
<keyword id="KW-0732">Signal</keyword>
<keyword id="KW-0813">Transport</keyword>
<proteinExistence type="inferred from homology"/>
<gene>
    <name type="primary">nrfC</name>
    <name type="ordered locus">SF4132</name>
    <name type="ordered locus">S3599</name>
</gene>
<organism>
    <name type="scientific">Shigella flexneri</name>
    <dbReference type="NCBI Taxonomy" id="623"/>
    <lineage>
        <taxon>Bacteria</taxon>
        <taxon>Pseudomonadati</taxon>
        <taxon>Pseudomonadota</taxon>
        <taxon>Gammaproteobacteria</taxon>
        <taxon>Enterobacterales</taxon>
        <taxon>Enterobacteriaceae</taxon>
        <taxon>Shigella</taxon>
    </lineage>
</organism>
<sequence>MTWSRRQFLTGVGVLAAVSGTAGRVVAKTLNINGVRYGMVHDESLCIGCTACMDACREVNKVPEGVSRLTIIRSEPQGEFPDVKYRFFRKSCQHCDHAPCVDVCPTGASFRDAASGIVDVNPDLCVGCQYCIAACPYRVRFIHPVTKTADKCDFCRKTNLQAGKLPACVEACPTKALTFGNLDDPNSEISQLLRQKPTYRYKLALGTKPKLYRVPFKYGEVSQ</sequence>
<protein>
    <recommendedName>
        <fullName>Protein NrfC</fullName>
    </recommendedName>
</protein>
<dbReference type="EMBL" id="AE005674">
    <property type="protein sequence ID" value="AAN45555.1"/>
    <property type="molecule type" value="Genomic_DNA"/>
</dbReference>
<dbReference type="EMBL" id="AE014073">
    <property type="protein sequence ID" value="AAP18643.1"/>
    <property type="molecule type" value="Genomic_DNA"/>
</dbReference>
<dbReference type="RefSeq" id="NP_709848.1">
    <property type="nucleotide sequence ID" value="NC_004337.2"/>
</dbReference>
<dbReference type="RefSeq" id="WP_000220281.1">
    <property type="nucleotide sequence ID" value="NZ_WPGW01000075.1"/>
</dbReference>
<dbReference type="SMR" id="P0AAK9"/>
<dbReference type="STRING" id="198214.SF4132"/>
<dbReference type="PaxDb" id="198214-SF4132"/>
<dbReference type="GeneID" id="1026882"/>
<dbReference type="GeneID" id="93777757"/>
<dbReference type="KEGG" id="sfl:SF4132"/>
<dbReference type="KEGG" id="sfx:S3599"/>
<dbReference type="PATRIC" id="fig|198214.7.peg.4875"/>
<dbReference type="HOGENOM" id="CLU_043374_1_3_6"/>
<dbReference type="Proteomes" id="UP000001006">
    <property type="component" value="Chromosome"/>
</dbReference>
<dbReference type="Proteomes" id="UP000002673">
    <property type="component" value="Chromosome"/>
</dbReference>
<dbReference type="GO" id="GO:0051539">
    <property type="term" value="F:4 iron, 4 sulfur cluster binding"/>
    <property type="evidence" value="ECO:0007669"/>
    <property type="project" value="UniProtKB-KW"/>
</dbReference>
<dbReference type="GO" id="GO:0046872">
    <property type="term" value="F:metal ion binding"/>
    <property type="evidence" value="ECO:0007669"/>
    <property type="project" value="UniProtKB-KW"/>
</dbReference>
<dbReference type="GO" id="GO:0016491">
    <property type="term" value="F:oxidoreductase activity"/>
    <property type="evidence" value="ECO:0007669"/>
    <property type="project" value="UniProtKB-KW"/>
</dbReference>
<dbReference type="CDD" id="cd10551">
    <property type="entry name" value="PsrB"/>
    <property type="match status" value="1"/>
</dbReference>
<dbReference type="FunFam" id="3.30.70.20:FF:000014">
    <property type="entry name" value="Cytochrome c nitrite reductase, Fe-S protein"/>
    <property type="match status" value="1"/>
</dbReference>
<dbReference type="Gene3D" id="3.30.70.20">
    <property type="match status" value="2"/>
</dbReference>
<dbReference type="InterPro" id="IPR017896">
    <property type="entry name" value="4Fe4S_Fe-S-bd"/>
</dbReference>
<dbReference type="InterPro" id="IPR017900">
    <property type="entry name" value="4Fe4S_Fe_S_CS"/>
</dbReference>
<dbReference type="InterPro" id="IPR017567">
    <property type="entry name" value="Cyt_c_NO2Rdtase_NrfC"/>
</dbReference>
<dbReference type="InterPro" id="IPR050954">
    <property type="entry name" value="ET_IronSulfur_Cluster-Binding"/>
</dbReference>
<dbReference type="InterPro" id="IPR006311">
    <property type="entry name" value="TAT_signal"/>
</dbReference>
<dbReference type="InterPro" id="IPR019546">
    <property type="entry name" value="TAT_signal_bac_arc"/>
</dbReference>
<dbReference type="NCBIfam" id="TIGR03149">
    <property type="entry name" value="cyt_nit_nrfC"/>
    <property type="match status" value="1"/>
</dbReference>
<dbReference type="NCBIfam" id="TIGR01409">
    <property type="entry name" value="TAT_signal_seq"/>
    <property type="match status" value="1"/>
</dbReference>
<dbReference type="PANTHER" id="PTHR43177">
    <property type="entry name" value="PROTEIN NRFC"/>
    <property type="match status" value="1"/>
</dbReference>
<dbReference type="PANTHER" id="PTHR43177:SF9">
    <property type="entry name" value="PROTEIN NRFC"/>
    <property type="match status" value="1"/>
</dbReference>
<dbReference type="Pfam" id="PF00037">
    <property type="entry name" value="Fer4"/>
    <property type="match status" value="1"/>
</dbReference>
<dbReference type="Pfam" id="PF13247">
    <property type="entry name" value="Fer4_11"/>
    <property type="match status" value="1"/>
</dbReference>
<dbReference type="SUPFAM" id="SSF54862">
    <property type="entry name" value="4Fe-4S ferredoxins"/>
    <property type="match status" value="1"/>
</dbReference>
<dbReference type="PROSITE" id="PS00198">
    <property type="entry name" value="4FE4S_FER_1"/>
    <property type="match status" value="1"/>
</dbReference>
<dbReference type="PROSITE" id="PS51379">
    <property type="entry name" value="4FE4S_FER_2"/>
    <property type="match status" value="3"/>
</dbReference>
<dbReference type="PROSITE" id="PS51318">
    <property type="entry name" value="TAT"/>
    <property type="match status" value="1"/>
</dbReference>
<comment type="function">
    <text evidence="1">Probably involved in the transfer of electrons from the quinone pool to the type-c cytochromes.</text>
</comment>
<comment type="PTM">
    <text>Predicted to be exported by the Tat system. The position of the signal peptide cleavage has not been experimentally proven.</text>
</comment>
<evidence type="ECO:0000250" key="1"/>
<evidence type="ECO:0000255" key="2">
    <source>
        <dbReference type="PROSITE-ProRule" id="PRU00648"/>
    </source>
</evidence>
<evidence type="ECO:0000255" key="3">
    <source>
        <dbReference type="PROSITE-ProRule" id="PRU00711"/>
    </source>
</evidence>
<feature type="signal peptide" description="Tat-type signal" evidence="2">
    <location>
        <begin position="1"/>
        <end position="27"/>
    </location>
</feature>
<feature type="chain" id="PRO_0000042278" description="Protein NrfC">
    <location>
        <begin position="28"/>
        <end position="223"/>
    </location>
</feature>
<feature type="domain" description="4Fe-4S ferredoxin-type 1" evidence="3">
    <location>
        <begin position="37"/>
        <end position="65"/>
    </location>
</feature>
<feature type="domain" description="4Fe-4S ferredoxin-type 2" evidence="3">
    <location>
        <begin position="83"/>
        <end position="114"/>
    </location>
</feature>
<feature type="domain" description="4Fe-4S ferredoxin-type 3" evidence="3">
    <location>
        <begin position="116"/>
        <end position="145"/>
    </location>
</feature>
<feature type="binding site" evidence="1">
    <location>
        <position position="46"/>
    </location>
    <ligand>
        <name>[4Fe-4S] cluster</name>
        <dbReference type="ChEBI" id="CHEBI:49883"/>
        <label>1</label>
    </ligand>
</feature>
<feature type="binding site" evidence="1">
    <location>
        <position position="49"/>
    </location>
    <ligand>
        <name>[4Fe-4S] cluster</name>
        <dbReference type="ChEBI" id="CHEBI:49883"/>
        <label>1</label>
    </ligand>
</feature>
<feature type="binding site" evidence="1">
    <location>
        <position position="52"/>
    </location>
    <ligand>
        <name>[4Fe-4S] cluster</name>
        <dbReference type="ChEBI" id="CHEBI:49883"/>
        <label>1</label>
    </ligand>
</feature>
<feature type="binding site" evidence="1">
    <location>
        <position position="56"/>
    </location>
    <ligand>
        <name>[4Fe-4S] cluster</name>
        <dbReference type="ChEBI" id="CHEBI:49883"/>
        <label>2</label>
    </ligand>
</feature>
<feature type="binding site" evidence="1">
    <location>
        <position position="92"/>
    </location>
    <ligand>
        <name>[4Fe-4S] cluster</name>
        <dbReference type="ChEBI" id="CHEBI:49883"/>
        <label>3</label>
    </ligand>
</feature>
<feature type="binding site" evidence="1">
    <location>
        <position position="95"/>
    </location>
    <ligand>
        <name>[4Fe-4S] cluster</name>
        <dbReference type="ChEBI" id="CHEBI:49883"/>
        <label>3</label>
    </ligand>
</feature>
<feature type="binding site" evidence="1">
    <location>
        <position position="100"/>
    </location>
    <ligand>
        <name>[4Fe-4S] cluster</name>
        <dbReference type="ChEBI" id="CHEBI:49883"/>
        <label>3</label>
    </ligand>
</feature>
<feature type="binding site" evidence="1">
    <location>
        <position position="104"/>
    </location>
    <ligand>
        <name>[4Fe-4S] cluster</name>
        <dbReference type="ChEBI" id="CHEBI:49883"/>
        <label>4</label>
    </ligand>
</feature>
<feature type="binding site" evidence="1">
    <location>
        <position position="125"/>
    </location>
    <ligand>
        <name>[4Fe-4S] cluster</name>
        <dbReference type="ChEBI" id="CHEBI:49883"/>
        <label>4</label>
    </ligand>
</feature>
<feature type="binding site" evidence="1">
    <location>
        <position position="128"/>
    </location>
    <ligand>
        <name>[4Fe-4S] cluster</name>
        <dbReference type="ChEBI" id="CHEBI:49883"/>
        <label>4</label>
    </ligand>
</feature>
<feature type="binding site" evidence="1">
    <location>
        <position position="131"/>
    </location>
    <ligand>
        <name>[4Fe-4S] cluster</name>
        <dbReference type="ChEBI" id="CHEBI:49883"/>
        <label>4</label>
    </ligand>
</feature>
<feature type="binding site" evidence="1">
    <location>
        <position position="135"/>
    </location>
    <ligand>
        <name>[4Fe-4S] cluster</name>
        <dbReference type="ChEBI" id="CHEBI:49883"/>
        <label>3</label>
    </ligand>
</feature>
<feature type="binding site" evidence="1">
    <location>
        <position position="152"/>
    </location>
    <ligand>
        <name>[4Fe-4S] cluster</name>
        <dbReference type="ChEBI" id="CHEBI:49883"/>
        <label>2</label>
    </ligand>
</feature>
<feature type="binding site" evidence="1">
    <location>
        <position position="155"/>
    </location>
    <ligand>
        <name>[4Fe-4S] cluster</name>
        <dbReference type="ChEBI" id="CHEBI:49883"/>
        <label>2</label>
    </ligand>
</feature>
<feature type="binding site" evidence="1">
    <location>
        <position position="168"/>
    </location>
    <ligand>
        <name>[4Fe-4S] cluster</name>
        <dbReference type="ChEBI" id="CHEBI:49883"/>
        <label>2</label>
    </ligand>
</feature>
<feature type="binding site" evidence="1">
    <location>
        <position position="172"/>
    </location>
    <ligand>
        <name>[4Fe-4S] cluster</name>
        <dbReference type="ChEBI" id="CHEBI:49883"/>
        <label>1</label>
    </ligand>
</feature>
<reference key="1">
    <citation type="journal article" date="2002" name="Nucleic Acids Res.">
        <title>Genome sequence of Shigella flexneri 2a: insights into pathogenicity through comparison with genomes of Escherichia coli K12 and O157.</title>
        <authorList>
            <person name="Jin Q."/>
            <person name="Yuan Z."/>
            <person name="Xu J."/>
            <person name="Wang Y."/>
            <person name="Shen Y."/>
            <person name="Lu W."/>
            <person name="Wang J."/>
            <person name="Liu H."/>
            <person name="Yang J."/>
            <person name="Yang F."/>
            <person name="Zhang X."/>
            <person name="Zhang J."/>
            <person name="Yang G."/>
            <person name="Wu H."/>
            <person name="Qu D."/>
            <person name="Dong J."/>
            <person name="Sun L."/>
            <person name="Xue Y."/>
            <person name="Zhao A."/>
            <person name="Gao Y."/>
            <person name="Zhu J."/>
            <person name="Kan B."/>
            <person name="Ding K."/>
            <person name="Chen S."/>
            <person name="Cheng H."/>
            <person name="Yao Z."/>
            <person name="He B."/>
            <person name="Chen R."/>
            <person name="Ma D."/>
            <person name="Qiang B."/>
            <person name="Wen Y."/>
            <person name="Hou Y."/>
            <person name="Yu J."/>
        </authorList>
    </citation>
    <scope>NUCLEOTIDE SEQUENCE [LARGE SCALE GENOMIC DNA]</scope>
    <source>
        <strain>301 / Serotype 2a</strain>
    </source>
</reference>
<reference key="2">
    <citation type="journal article" date="2003" name="Infect. Immun.">
        <title>Complete genome sequence and comparative genomics of Shigella flexneri serotype 2a strain 2457T.</title>
        <authorList>
            <person name="Wei J."/>
            <person name="Goldberg M.B."/>
            <person name="Burland V."/>
            <person name="Venkatesan M.M."/>
            <person name="Deng W."/>
            <person name="Fournier G."/>
            <person name="Mayhew G.F."/>
            <person name="Plunkett G. III"/>
            <person name="Rose D.J."/>
            <person name="Darling A."/>
            <person name="Mau B."/>
            <person name="Perna N.T."/>
            <person name="Payne S.M."/>
            <person name="Runyen-Janecky L.J."/>
            <person name="Zhou S."/>
            <person name="Schwartz D.C."/>
            <person name="Blattner F.R."/>
        </authorList>
    </citation>
    <scope>NUCLEOTIDE SEQUENCE [LARGE SCALE GENOMIC DNA]</scope>
    <source>
        <strain>ATCC 700930 / 2457T / Serotype 2a</strain>
    </source>
</reference>